<keyword id="KW-0548">Nucleotidyltransferase</keyword>
<keyword id="KW-0694">RNA-binding</keyword>
<keyword id="KW-0698">rRNA processing</keyword>
<keyword id="KW-0808">Transferase</keyword>
<keyword id="KW-0819">tRNA processing</keyword>
<keyword id="KW-0820">tRNA-binding</keyword>
<proteinExistence type="inferred from homology"/>
<organism>
    <name type="scientific">Coxiella burnetii (strain RSA 331 / Henzerling II)</name>
    <dbReference type="NCBI Taxonomy" id="360115"/>
    <lineage>
        <taxon>Bacteria</taxon>
        <taxon>Pseudomonadati</taxon>
        <taxon>Pseudomonadota</taxon>
        <taxon>Gammaproteobacteria</taxon>
        <taxon>Legionellales</taxon>
        <taxon>Coxiellaceae</taxon>
        <taxon>Coxiella</taxon>
    </lineage>
</organism>
<comment type="function">
    <text evidence="1">Phosphorolytic 3'-5' exoribonuclease that plays an important role in tRNA 3'-end maturation. Removes nucleotide residues following the 3'-CCA terminus of tRNAs; can also add nucleotides to the ends of RNA molecules by using nucleoside diphosphates as substrates, but this may not be physiologically important. Probably plays a role in initiation of 16S rRNA degradation (leading to ribosome degradation) during starvation.</text>
</comment>
<comment type="catalytic activity">
    <reaction evidence="1">
        <text>tRNA(n+1) + phosphate = tRNA(n) + a ribonucleoside 5'-diphosphate</text>
        <dbReference type="Rhea" id="RHEA:10628"/>
        <dbReference type="Rhea" id="RHEA-COMP:17343"/>
        <dbReference type="Rhea" id="RHEA-COMP:17344"/>
        <dbReference type="ChEBI" id="CHEBI:43474"/>
        <dbReference type="ChEBI" id="CHEBI:57930"/>
        <dbReference type="ChEBI" id="CHEBI:173114"/>
        <dbReference type="EC" id="2.7.7.56"/>
    </reaction>
</comment>
<comment type="subunit">
    <text evidence="1">Homohexameric ring arranged as a trimer of dimers.</text>
</comment>
<comment type="similarity">
    <text evidence="1">Belongs to the RNase PH family.</text>
</comment>
<protein>
    <recommendedName>
        <fullName evidence="1">Ribonuclease PH</fullName>
        <shortName evidence="1">RNase PH</shortName>
        <ecNumber evidence="1">2.7.7.56</ecNumber>
    </recommendedName>
    <alternativeName>
        <fullName evidence="1">tRNA nucleotidyltransferase</fullName>
    </alternativeName>
</protein>
<sequence>MRPSKRAANELRPLSFTTQFTRYAEGSVLVTLGNTKVICNASIVEGVPRFLKNSEQGWLTAEYGMLPRSTHSRMDREASRGKQGGRTVEIQRLIGRSLRAALDLKLLGPYTITIDCDVIQADGGTRTAAINGSCIAMIEALRHLQRKGILQTDPLKHKVAAVSVGIYKGVPVLDLDYAEDSNAHTDMNVVMTDNDAFIEIQGTAEGDAFHAKELDALINLARHGIKQIIEKQQEALS</sequence>
<reference key="1">
    <citation type="submission" date="2007-11" db="EMBL/GenBank/DDBJ databases">
        <title>Genome sequencing of phylogenetically and phenotypically diverse Coxiella burnetii isolates.</title>
        <authorList>
            <person name="Seshadri R."/>
            <person name="Samuel J.E."/>
        </authorList>
    </citation>
    <scope>NUCLEOTIDE SEQUENCE [LARGE SCALE GENOMIC DNA]</scope>
    <source>
        <strain>RSA 331 / Henzerling II</strain>
    </source>
</reference>
<accession>A9NB33</accession>
<name>RNPH_COXBR</name>
<feature type="chain" id="PRO_1000082288" description="Ribonuclease PH">
    <location>
        <begin position="1"/>
        <end position="237"/>
    </location>
</feature>
<feature type="binding site" evidence="1">
    <location>
        <position position="86"/>
    </location>
    <ligand>
        <name>phosphate</name>
        <dbReference type="ChEBI" id="CHEBI:43474"/>
        <note>substrate</note>
    </ligand>
</feature>
<feature type="binding site" evidence="1">
    <location>
        <begin position="124"/>
        <end position="126"/>
    </location>
    <ligand>
        <name>phosphate</name>
        <dbReference type="ChEBI" id="CHEBI:43474"/>
        <note>substrate</note>
    </ligand>
</feature>
<gene>
    <name evidence="1" type="primary">rph</name>
    <name type="ordered locus">COXBURSA331_A0405</name>
</gene>
<dbReference type="EC" id="2.7.7.56" evidence="1"/>
<dbReference type="EMBL" id="CP000890">
    <property type="protein sequence ID" value="ABX77309.1"/>
    <property type="molecule type" value="Genomic_DNA"/>
</dbReference>
<dbReference type="RefSeq" id="WP_005771419.1">
    <property type="nucleotide sequence ID" value="NC_010117.1"/>
</dbReference>
<dbReference type="SMR" id="A9NB33"/>
<dbReference type="KEGG" id="cbs:COXBURSA331_A0405"/>
<dbReference type="HOGENOM" id="CLU_050858_0_0_6"/>
<dbReference type="GO" id="GO:0000175">
    <property type="term" value="F:3'-5'-RNA exonuclease activity"/>
    <property type="evidence" value="ECO:0007669"/>
    <property type="project" value="UniProtKB-UniRule"/>
</dbReference>
<dbReference type="GO" id="GO:0000049">
    <property type="term" value="F:tRNA binding"/>
    <property type="evidence" value="ECO:0007669"/>
    <property type="project" value="UniProtKB-UniRule"/>
</dbReference>
<dbReference type="GO" id="GO:0009022">
    <property type="term" value="F:tRNA nucleotidyltransferase activity"/>
    <property type="evidence" value="ECO:0007669"/>
    <property type="project" value="UniProtKB-UniRule"/>
</dbReference>
<dbReference type="GO" id="GO:0016075">
    <property type="term" value="P:rRNA catabolic process"/>
    <property type="evidence" value="ECO:0007669"/>
    <property type="project" value="UniProtKB-UniRule"/>
</dbReference>
<dbReference type="GO" id="GO:0006364">
    <property type="term" value="P:rRNA processing"/>
    <property type="evidence" value="ECO:0007669"/>
    <property type="project" value="UniProtKB-KW"/>
</dbReference>
<dbReference type="GO" id="GO:0008033">
    <property type="term" value="P:tRNA processing"/>
    <property type="evidence" value="ECO:0007669"/>
    <property type="project" value="UniProtKB-UniRule"/>
</dbReference>
<dbReference type="CDD" id="cd11362">
    <property type="entry name" value="RNase_PH_bact"/>
    <property type="match status" value="1"/>
</dbReference>
<dbReference type="FunFam" id="3.30.230.70:FF:000003">
    <property type="entry name" value="Ribonuclease PH"/>
    <property type="match status" value="1"/>
</dbReference>
<dbReference type="Gene3D" id="3.30.230.70">
    <property type="entry name" value="GHMP Kinase, N-terminal domain"/>
    <property type="match status" value="1"/>
</dbReference>
<dbReference type="HAMAP" id="MF_00564">
    <property type="entry name" value="RNase_PH"/>
    <property type="match status" value="1"/>
</dbReference>
<dbReference type="InterPro" id="IPR001247">
    <property type="entry name" value="ExoRNase_PH_dom1"/>
</dbReference>
<dbReference type="InterPro" id="IPR015847">
    <property type="entry name" value="ExoRNase_PH_dom2"/>
</dbReference>
<dbReference type="InterPro" id="IPR036345">
    <property type="entry name" value="ExoRNase_PH_dom2_sf"/>
</dbReference>
<dbReference type="InterPro" id="IPR027408">
    <property type="entry name" value="PNPase/RNase_PH_dom_sf"/>
</dbReference>
<dbReference type="InterPro" id="IPR020568">
    <property type="entry name" value="Ribosomal_Su5_D2-typ_SF"/>
</dbReference>
<dbReference type="InterPro" id="IPR050080">
    <property type="entry name" value="RNase_PH"/>
</dbReference>
<dbReference type="InterPro" id="IPR002381">
    <property type="entry name" value="RNase_PH_bac-type"/>
</dbReference>
<dbReference type="InterPro" id="IPR018336">
    <property type="entry name" value="RNase_PH_CS"/>
</dbReference>
<dbReference type="NCBIfam" id="TIGR01966">
    <property type="entry name" value="RNasePH"/>
    <property type="match status" value="1"/>
</dbReference>
<dbReference type="PANTHER" id="PTHR11953">
    <property type="entry name" value="EXOSOME COMPLEX COMPONENT"/>
    <property type="match status" value="1"/>
</dbReference>
<dbReference type="PANTHER" id="PTHR11953:SF0">
    <property type="entry name" value="EXOSOME COMPLEX COMPONENT RRP41"/>
    <property type="match status" value="1"/>
</dbReference>
<dbReference type="Pfam" id="PF01138">
    <property type="entry name" value="RNase_PH"/>
    <property type="match status" value="1"/>
</dbReference>
<dbReference type="Pfam" id="PF03725">
    <property type="entry name" value="RNase_PH_C"/>
    <property type="match status" value="1"/>
</dbReference>
<dbReference type="SUPFAM" id="SSF55666">
    <property type="entry name" value="Ribonuclease PH domain 2-like"/>
    <property type="match status" value="1"/>
</dbReference>
<dbReference type="SUPFAM" id="SSF54211">
    <property type="entry name" value="Ribosomal protein S5 domain 2-like"/>
    <property type="match status" value="1"/>
</dbReference>
<dbReference type="PROSITE" id="PS01277">
    <property type="entry name" value="RIBONUCLEASE_PH"/>
    <property type="match status" value="1"/>
</dbReference>
<evidence type="ECO:0000255" key="1">
    <source>
        <dbReference type="HAMAP-Rule" id="MF_00564"/>
    </source>
</evidence>